<organism>
    <name type="scientific">Salmonella schwarzengrund (strain CVM19633)</name>
    <dbReference type="NCBI Taxonomy" id="439843"/>
    <lineage>
        <taxon>Bacteria</taxon>
        <taxon>Pseudomonadati</taxon>
        <taxon>Pseudomonadota</taxon>
        <taxon>Gammaproteobacteria</taxon>
        <taxon>Enterobacterales</taxon>
        <taxon>Enterobacteriaceae</taxon>
        <taxon>Salmonella</taxon>
    </lineage>
</organism>
<feature type="chain" id="PRO_1000121555" description="Imidazolonepropionase">
    <location>
        <begin position="1"/>
        <end position="407"/>
    </location>
</feature>
<feature type="binding site" evidence="1">
    <location>
        <position position="74"/>
    </location>
    <ligand>
        <name>Fe(3+)</name>
        <dbReference type="ChEBI" id="CHEBI:29034"/>
    </ligand>
</feature>
<feature type="binding site" evidence="1">
    <location>
        <position position="74"/>
    </location>
    <ligand>
        <name>Zn(2+)</name>
        <dbReference type="ChEBI" id="CHEBI:29105"/>
    </ligand>
</feature>
<feature type="binding site" evidence="1">
    <location>
        <position position="76"/>
    </location>
    <ligand>
        <name>Fe(3+)</name>
        <dbReference type="ChEBI" id="CHEBI:29034"/>
    </ligand>
</feature>
<feature type="binding site" evidence="1">
    <location>
        <position position="76"/>
    </location>
    <ligand>
        <name>Zn(2+)</name>
        <dbReference type="ChEBI" id="CHEBI:29105"/>
    </ligand>
</feature>
<feature type="binding site" evidence="1">
    <location>
        <position position="83"/>
    </location>
    <ligand>
        <name>4-imidazolone-5-propanoate</name>
        <dbReference type="ChEBI" id="CHEBI:77893"/>
    </ligand>
</feature>
<feature type="binding site" evidence="1">
    <location>
        <position position="146"/>
    </location>
    <ligand>
        <name>4-imidazolone-5-propanoate</name>
        <dbReference type="ChEBI" id="CHEBI:77893"/>
    </ligand>
</feature>
<feature type="binding site" evidence="1">
    <location>
        <position position="146"/>
    </location>
    <ligand>
        <name>N-formimidoyl-L-glutamate</name>
        <dbReference type="ChEBI" id="CHEBI:58928"/>
    </ligand>
</feature>
<feature type="binding site" evidence="1">
    <location>
        <position position="179"/>
    </location>
    <ligand>
        <name>4-imidazolone-5-propanoate</name>
        <dbReference type="ChEBI" id="CHEBI:77893"/>
    </ligand>
</feature>
<feature type="binding site" evidence="1">
    <location>
        <position position="244"/>
    </location>
    <ligand>
        <name>Fe(3+)</name>
        <dbReference type="ChEBI" id="CHEBI:29034"/>
    </ligand>
</feature>
<feature type="binding site" evidence="1">
    <location>
        <position position="244"/>
    </location>
    <ligand>
        <name>Zn(2+)</name>
        <dbReference type="ChEBI" id="CHEBI:29105"/>
    </ligand>
</feature>
<feature type="binding site" evidence="1">
    <location>
        <position position="247"/>
    </location>
    <ligand>
        <name>4-imidazolone-5-propanoate</name>
        <dbReference type="ChEBI" id="CHEBI:77893"/>
    </ligand>
</feature>
<feature type="binding site" evidence="1">
    <location>
        <position position="319"/>
    </location>
    <ligand>
        <name>Fe(3+)</name>
        <dbReference type="ChEBI" id="CHEBI:29034"/>
    </ligand>
</feature>
<feature type="binding site" evidence="1">
    <location>
        <position position="319"/>
    </location>
    <ligand>
        <name>Zn(2+)</name>
        <dbReference type="ChEBI" id="CHEBI:29105"/>
    </ligand>
</feature>
<feature type="binding site" evidence="1">
    <location>
        <position position="321"/>
    </location>
    <ligand>
        <name>N-formimidoyl-L-glutamate</name>
        <dbReference type="ChEBI" id="CHEBI:58928"/>
    </ligand>
</feature>
<feature type="binding site" evidence="1">
    <location>
        <position position="323"/>
    </location>
    <ligand>
        <name>N-formimidoyl-L-glutamate</name>
        <dbReference type="ChEBI" id="CHEBI:58928"/>
    </ligand>
</feature>
<feature type="binding site" evidence="1">
    <location>
        <position position="324"/>
    </location>
    <ligand>
        <name>4-imidazolone-5-propanoate</name>
        <dbReference type="ChEBI" id="CHEBI:77893"/>
    </ligand>
</feature>
<evidence type="ECO:0000255" key="1">
    <source>
        <dbReference type="HAMAP-Rule" id="MF_00372"/>
    </source>
</evidence>
<gene>
    <name evidence="1" type="primary">hutI</name>
    <name type="ordered locus">SeSA_A0937</name>
</gene>
<dbReference type="EC" id="3.5.2.7" evidence="1"/>
<dbReference type="EMBL" id="CP001127">
    <property type="protein sequence ID" value="ACF92379.1"/>
    <property type="molecule type" value="Genomic_DNA"/>
</dbReference>
<dbReference type="RefSeq" id="WP_001249491.1">
    <property type="nucleotide sequence ID" value="NC_011094.1"/>
</dbReference>
<dbReference type="SMR" id="B4TQT2"/>
<dbReference type="KEGG" id="sew:SeSA_A0937"/>
<dbReference type="HOGENOM" id="CLU_041647_0_0_6"/>
<dbReference type="UniPathway" id="UPA00379">
    <property type="reaction ID" value="UER00551"/>
</dbReference>
<dbReference type="Proteomes" id="UP000001865">
    <property type="component" value="Chromosome"/>
</dbReference>
<dbReference type="GO" id="GO:0005737">
    <property type="term" value="C:cytoplasm"/>
    <property type="evidence" value="ECO:0007669"/>
    <property type="project" value="UniProtKB-SubCell"/>
</dbReference>
<dbReference type="GO" id="GO:0050480">
    <property type="term" value="F:imidazolonepropionase activity"/>
    <property type="evidence" value="ECO:0007669"/>
    <property type="project" value="UniProtKB-UniRule"/>
</dbReference>
<dbReference type="GO" id="GO:0005506">
    <property type="term" value="F:iron ion binding"/>
    <property type="evidence" value="ECO:0007669"/>
    <property type="project" value="UniProtKB-UniRule"/>
</dbReference>
<dbReference type="GO" id="GO:0008270">
    <property type="term" value="F:zinc ion binding"/>
    <property type="evidence" value="ECO:0007669"/>
    <property type="project" value="UniProtKB-UniRule"/>
</dbReference>
<dbReference type="GO" id="GO:0019556">
    <property type="term" value="P:L-histidine catabolic process to glutamate and formamide"/>
    <property type="evidence" value="ECO:0007669"/>
    <property type="project" value="UniProtKB-UniPathway"/>
</dbReference>
<dbReference type="GO" id="GO:0019557">
    <property type="term" value="P:L-histidine catabolic process to glutamate and formate"/>
    <property type="evidence" value="ECO:0007669"/>
    <property type="project" value="UniProtKB-UniPathway"/>
</dbReference>
<dbReference type="CDD" id="cd01296">
    <property type="entry name" value="Imidazolone-5PH"/>
    <property type="match status" value="1"/>
</dbReference>
<dbReference type="FunFam" id="3.20.20.140:FF:000007">
    <property type="entry name" value="Imidazolonepropionase"/>
    <property type="match status" value="1"/>
</dbReference>
<dbReference type="Gene3D" id="3.20.20.140">
    <property type="entry name" value="Metal-dependent hydrolases"/>
    <property type="match status" value="1"/>
</dbReference>
<dbReference type="Gene3D" id="2.30.40.10">
    <property type="entry name" value="Urease, subunit C, domain 1"/>
    <property type="match status" value="1"/>
</dbReference>
<dbReference type="HAMAP" id="MF_00372">
    <property type="entry name" value="HutI"/>
    <property type="match status" value="1"/>
</dbReference>
<dbReference type="InterPro" id="IPR006680">
    <property type="entry name" value="Amidohydro-rel"/>
</dbReference>
<dbReference type="InterPro" id="IPR005920">
    <property type="entry name" value="HutI"/>
</dbReference>
<dbReference type="InterPro" id="IPR011059">
    <property type="entry name" value="Metal-dep_hydrolase_composite"/>
</dbReference>
<dbReference type="InterPro" id="IPR032466">
    <property type="entry name" value="Metal_Hydrolase"/>
</dbReference>
<dbReference type="NCBIfam" id="TIGR01224">
    <property type="entry name" value="hutI"/>
    <property type="match status" value="1"/>
</dbReference>
<dbReference type="PANTHER" id="PTHR42752">
    <property type="entry name" value="IMIDAZOLONEPROPIONASE"/>
    <property type="match status" value="1"/>
</dbReference>
<dbReference type="PANTHER" id="PTHR42752:SF1">
    <property type="entry name" value="IMIDAZOLONEPROPIONASE-RELATED"/>
    <property type="match status" value="1"/>
</dbReference>
<dbReference type="Pfam" id="PF01979">
    <property type="entry name" value="Amidohydro_1"/>
    <property type="match status" value="1"/>
</dbReference>
<dbReference type="SUPFAM" id="SSF51338">
    <property type="entry name" value="Composite domain of metallo-dependent hydrolases"/>
    <property type="match status" value="1"/>
</dbReference>
<dbReference type="SUPFAM" id="SSF51556">
    <property type="entry name" value="Metallo-dependent hydrolases"/>
    <property type="match status" value="1"/>
</dbReference>
<accession>B4TQT2</accession>
<comment type="function">
    <text evidence="1">Catalyzes the hydrolytic cleavage of the carbon-nitrogen bond in imidazolone-5-propanoate to yield N-formimidoyl-L-glutamate. It is the third step in the universal histidine degradation pathway.</text>
</comment>
<comment type="catalytic activity">
    <reaction evidence="1">
        <text>4-imidazolone-5-propanoate + H2O = N-formimidoyl-L-glutamate</text>
        <dbReference type="Rhea" id="RHEA:23660"/>
        <dbReference type="ChEBI" id="CHEBI:15377"/>
        <dbReference type="ChEBI" id="CHEBI:58928"/>
        <dbReference type="ChEBI" id="CHEBI:77893"/>
        <dbReference type="EC" id="3.5.2.7"/>
    </reaction>
</comment>
<comment type="cofactor">
    <cofactor evidence="1">
        <name>Zn(2+)</name>
        <dbReference type="ChEBI" id="CHEBI:29105"/>
    </cofactor>
    <cofactor evidence="1">
        <name>Fe(3+)</name>
        <dbReference type="ChEBI" id="CHEBI:29034"/>
    </cofactor>
    <text evidence="1">Binds 1 zinc or iron ion per subunit.</text>
</comment>
<comment type="pathway">
    <text evidence="1">Amino-acid degradation; L-histidine degradation into L-glutamate; N-formimidoyl-L-glutamate from L-histidine: step 3/3.</text>
</comment>
<comment type="subcellular location">
    <subcellularLocation>
        <location evidence="1">Cytoplasm</location>
    </subcellularLocation>
</comment>
<comment type="similarity">
    <text evidence="1">Belongs to the metallo-dependent hydrolases superfamily. HutI family.</text>
</comment>
<reference key="1">
    <citation type="journal article" date="2011" name="J. Bacteriol.">
        <title>Comparative genomics of 28 Salmonella enterica isolates: evidence for CRISPR-mediated adaptive sublineage evolution.</title>
        <authorList>
            <person name="Fricke W.F."/>
            <person name="Mammel M.K."/>
            <person name="McDermott P.F."/>
            <person name="Tartera C."/>
            <person name="White D.G."/>
            <person name="Leclerc J.E."/>
            <person name="Ravel J."/>
            <person name="Cebula T.A."/>
        </authorList>
    </citation>
    <scope>NUCLEOTIDE SEQUENCE [LARGE SCALE GENOMIC DNA]</scope>
    <source>
        <strain>CVM19633</strain>
    </source>
</reference>
<protein>
    <recommendedName>
        <fullName evidence="1">Imidazolonepropionase</fullName>
        <ecNumber evidence="1">3.5.2.7</ecNumber>
    </recommendedName>
    <alternativeName>
        <fullName evidence="1">Imidazolone-5-propionate hydrolase</fullName>
    </alternativeName>
</protein>
<proteinExistence type="inferred from homology"/>
<sequence>MRQLLPGDTVWRNIRLATMDPQRQAPYGLVDNQALIVRGGHICDIVPETQLPVSGDNIHDMQGRLVTPGLIDCHTHLVFAGNRAAEWEQRLNGASYQHISAQGGGINATVSATRACAEETLYLLARERMMRLASEGVTLLEIKSGYGLELATEEKLLRVAAKLAAENAIDISPTLLAAHATPAEYRDDPDGYITLVCETMIPQLWQKGLFDAVDLFCESVGFNVAQSERVLQTAKALGIPVKGHVEQLSLLGGAQLVSRYQGLSADHIEYLDEAGVAAMRDGGTVGVLLPGAFYFLRETQRPPVELLRRYQVPVAVASDFNPGTSPFCSLHLAMNMACVQFGLTPEEAWAGVTRHAARALGRQATHGQIRAGYRADFVVWDAEQPVEIVYEPGRNPLYQRVYRGKIS</sequence>
<name>HUTI_SALSV</name>
<keyword id="KW-0963">Cytoplasm</keyword>
<keyword id="KW-0369">Histidine metabolism</keyword>
<keyword id="KW-0378">Hydrolase</keyword>
<keyword id="KW-0408">Iron</keyword>
<keyword id="KW-0479">Metal-binding</keyword>
<keyword id="KW-0862">Zinc</keyword>